<protein>
    <recommendedName>
        <fullName evidence="1">1-(5-phosphoribosyl)-5-[(5-phosphoribosylamino)methylideneamino] imidazole-4-carboxamide isomerase</fullName>
        <ecNumber evidence="1">5.3.1.16</ecNumber>
    </recommendedName>
    <alternativeName>
        <fullName evidence="1">Phosphoribosylformimino-5-aminoimidazole carboxamide ribotide isomerase</fullName>
    </alternativeName>
</protein>
<dbReference type="EC" id="5.3.1.16" evidence="1"/>
<dbReference type="EMBL" id="CP000477">
    <property type="protein sequence ID" value="ABK14788.1"/>
    <property type="molecule type" value="Genomic_DNA"/>
</dbReference>
<dbReference type="RefSeq" id="WP_011696182.1">
    <property type="nucleotide sequence ID" value="NC_008553.1"/>
</dbReference>
<dbReference type="SMR" id="A0B7W4"/>
<dbReference type="STRING" id="349307.Mthe_1003"/>
<dbReference type="GeneID" id="4463202"/>
<dbReference type="KEGG" id="mtp:Mthe_1003"/>
<dbReference type="HOGENOM" id="CLU_048577_1_1_2"/>
<dbReference type="OrthoDB" id="52866at2157"/>
<dbReference type="UniPathway" id="UPA00031">
    <property type="reaction ID" value="UER00009"/>
</dbReference>
<dbReference type="Proteomes" id="UP000000674">
    <property type="component" value="Chromosome"/>
</dbReference>
<dbReference type="GO" id="GO:0005737">
    <property type="term" value="C:cytoplasm"/>
    <property type="evidence" value="ECO:0007669"/>
    <property type="project" value="UniProtKB-SubCell"/>
</dbReference>
<dbReference type="GO" id="GO:0003949">
    <property type="term" value="F:1-(5-phosphoribosyl)-5-[(5-phosphoribosylamino)methylideneamino]imidazole-4-carboxamide isomerase activity"/>
    <property type="evidence" value="ECO:0007669"/>
    <property type="project" value="UniProtKB-UniRule"/>
</dbReference>
<dbReference type="GO" id="GO:0000105">
    <property type="term" value="P:L-histidine biosynthetic process"/>
    <property type="evidence" value="ECO:0007669"/>
    <property type="project" value="UniProtKB-UniRule"/>
</dbReference>
<dbReference type="GO" id="GO:0000162">
    <property type="term" value="P:L-tryptophan biosynthetic process"/>
    <property type="evidence" value="ECO:0007669"/>
    <property type="project" value="TreeGrafter"/>
</dbReference>
<dbReference type="CDD" id="cd04732">
    <property type="entry name" value="HisA"/>
    <property type="match status" value="1"/>
</dbReference>
<dbReference type="FunFam" id="3.20.20.70:FF:000009">
    <property type="entry name" value="1-(5-phosphoribosyl)-5-[(5-phosphoribosylamino)methylideneamino] imidazole-4-carboxamide isomerase"/>
    <property type="match status" value="1"/>
</dbReference>
<dbReference type="Gene3D" id="3.20.20.70">
    <property type="entry name" value="Aldolase class I"/>
    <property type="match status" value="1"/>
</dbReference>
<dbReference type="HAMAP" id="MF_01014">
    <property type="entry name" value="HisA"/>
    <property type="match status" value="1"/>
</dbReference>
<dbReference type="InterPro" id="IPR013785">
    <property type="entry name" value="Aldolase_TIM"/>
</dbReference>
<dbReference type="InterPro" id="IPR006062">
    <property type="entry name" value="His_biosynth"/>
</dbReference>
<dbReference type="InterPro" id="IPR006063">
    <property type="entry name" value="HisA_bact_arch"/>
</dbReference>
<dbReference type="InterPro" id="IPR044524">
    <property type="entry name" value="Isoase_HisA-like"/>
</dbReference>
<dbReference type="InterPro" id="IPR023016">
    <property type="entry name" value="Isoase_HisA-like_bact"/>
</dbReference>
<dbReference type="InterPro" id="IPR011060">
    <property type="entry name" value="RibuloseP-bd_barrel"/>
</dbReference>
<dbReference type="NCBIfam" id="TIGR00007">
    <property type="entry name" value="1-(5-phosphoribosyl)-5-[(5-phosphoribosylamino)methylideneamino]imidazole-4-carboxamide isomerase"/>
    <property type="match status" value="1"/>
</dbReference>
<dbReference type="NCBIfam" id="NF010112">
    <property type="entry name" value="PRK13585.1"/>
    <property type="match status" value="1"/>
</dbReference>
<dbReference type="PANTHER" id="PTHR43090">
    <property type="entry name" value="1-(5-PHOSPHORIBOSYL)-5-[(5-PHOSPHORIBOSYLAMINO)METHYLIDENEAMINO] IMIDAZOLE-4-CARBOXAMIDE ISOMERASE"/>
    <property type="match status" value="1"/>
</dbReference>
<dbReference type="PANTHER" id="PTHR43090:SF7">
    <property type="entry name" value="1-(5-PHOSPHORIBOSYL)-5-[(5-PHOSPHORIBOSYLAMINO)METHYLIDENEAMINO] IMIDAZOLE-4-CARBOXAMIDE ISOMERASE"/>
    <property type="match status" value="1"/>
</dbReference>
<dbReference type="Pfam" id="PF00977">
    <property type="entry name" value="His_biosynth"/>
    <property type="match status" value="1"/>
</dbReference>
<dbReference type="SUPFAM" id="SSF51366">
    <property type="entry name" value="Ribulose-phoshate binding barrel"/>
    <property type="match status" value="1"/>
</dbReference>
<reference key="1">
    <citation type="submission" date="2006-10" db="EMBL/GenBank/DDBJ databases">
        <title>Complete sequence of Methanosaeta thermophila PT.</title>
        <authorList>
            <consortium name="US DOE Joint Genome Institute"/>
            <person name="Copeland A."/>
            <person name="Lucas S."/>
            <person name="Lapidus A."/>
            <person name="Barry K."/>
            <person name="Detter J.C."/>
            <person name="Glavina del Rio T."/>
            <person name="Hammon N."/>
            <person name="Israni S."/>
            <person name="Pitluck S."/>
            <person name="Chain P."/>
            <person name="Malfatti S."/>
            <person name="Shin M."/>
            <person name="Vergez L."/>
            <person name="Schmutz J."/>
            <person name="Larimer F."/>
            <person name="Land M."/>
            <person name="Hauser L."/>
            <person name="Kyrpides N."/>
            <person name="Kim E."/>
            <person name="Smith K.S."/>
            <person name="Ingram-Smith C."/>
            <person name="Richardson P."/>
        </authorList>
    </citation>
    <scope>NUCLEOTIDE SEQUENCE [LARGE SCALE GENOMIC DNA]</scope>
    <source>
        <strain>DSM 6194 / JCM 14653 / NBRC 101360 / PT</strain>
    </source>
</reference>
<sequence length="242" mass="25771">MTFDIFPAVDLRGGRCVQLVQGVPGSEVVSLDDPLVQAVRWADMGADHLHIIDLDGAIEGTRLNAPILRRIVGELEVFVQVGGGIRSRSDVAEVLDTGVDRVILGTMALRDPPVVKELAEEYGPDRIMVALDVRDGRVTSEGWQRTLEFDAIELGIVFESFGAGSILFTNIDTEGQQRGVDPEPTRELVEAVSIPVIAAGGVSSLDDIKLLSDAGAAGAVIGTAIYTGTLNLREALELAKTL</sequence>
<proteinExistence type="inferred from homology"/>
<accession>A0B7W4</accession>
<feature type="chain" id="PRO_0000290576" description="1-(5-phosphoribosyl)-5-[(5-phosphoribosylamino)methylideneamino] imidazole-4-carboxamide isomerase">
    <location>
        <begin position="1"/>
        <end position="242"/>
    </location>
</feature>
<feature type="active site" description="Proton acceptor" evidence="1">
    <location>
        <position position="10"/>
    </location>
</feature>
<feature type="active site" description="Proton donor" evidence="1">
    <location>
        <position position="132"/>
    </location>
</feature>
<keyword id="KW-0028">Amino-acid biosynthesis</keyword>
<keyword id="KW-0963">Cytoplasm</keyword>
<keyword id="KW-0368">Histidine biosynthesis</keyword>
<keyword id="KW-0413">Isomerase</keyword>
<keyword id="KW-1185">Reference proteome</keyword>
<comment type="catalytic activity">
    <reaction evidence="1">
        <text>1-(5-phospho-beta-D-ribosyl)-5-[(5-phospho-beta-D-ribosylamino)methylideneamino]imidazole-4-carboxamide = 5-[(5-phospho-1-deoxy-D-ribulos-1-ylimino)methylamino]-1-(5-phospho-beta-D-ribosyl)imidazole-4-carboxamide</text>
        <dbReference type="Rhea" id="RHEA:15469"/>
        <dbReference type="ChEBI" id="CHEBI:58435"/>
        <dbReference type="ChEBI" id="CHEBI:58525"/>
        <dbReference type="EC" id="5.3.1.16"/>
    </reaction>
</comment>
<comment type="pathway">
    <text evidence="1">Amino-acid biosynthesis; L-histidine biosynthesis; L-histidine from 5-phospho-alpha-D-ribose 1-diphosphate: step 4/9.</text>
</comment>
<comment type="subcellular location">
    <subcellularLocation>
        <location evidence="1">Cytoplasm</location>
    </subcellularLocation>
</comment>
<comment type="similarity">
    <text evidence="1">Belongs to the HisA/HisF family.</text>
</comment>
<evidence type="ECO:0000255" key="1">
    <source>
        <dbReference type="HAMAP-Rule" id="MF_01014"/>
    </source>
</evidence>
<organism>
    <name type="scientific">Methanothrix thermoacetophila (strain DSM 6194 / JCM 14653 / NBRC 101360 / PT)</name>
    <name type="common">Methanosaeta thermophila</name>
    <dbReference type="NCBI Taxonomy" id="349307"/>
    <lineage>
        <taxon>Archaea</taxon>
        <taxon>Methanobacteriati</taxon>
        <taxon>Methanobacteriota</taxon>
        <taxon>Stenosarchaea group</taxon>
        <taxon>Methanomicrobia</taxon>
        <taxon>Methanotrichales</taxon>
        <taxon>Methanotrichaceae</taxon>
        <taxon>Methanothrix</taxon>
    </lineage>
</organism>
<name>HIS4_METTP</name>
<gene>
    <name evidence="1" type="primary">hisA</name>
    <name type="ordered locus">Mthe_1003</name>
</gene>